<gene>
    <name type="primary">cblb-a</name>
</gene>
<keyword id="KW-0106">Calcium</keyword>
<keyword id="KW-0963">Cytoplasm</keyword>
<keyword id="KW-0391">Immunity</keyword>
<keyword id="KW-0479">Metal-binding</keyword>
<keyword id="KW-1185">Reference proteome</keyword>
<keyword id="KW-0677">Repeat</keyword>
<keyword id="KW-0808">Transferase</keyword>
<keyword id="KW-0833">Ubl conjugation pathway</keyword>
<keyword id="KW-0862">Zinc</keyword>
<keyword id="KW-0863">Zinc-finger</keyword>
<proteinExistence type="evidence at transcript level"/>
<organism>
    <name type="scientific">Xenopus laevis</name>
    <name type="common">African clawed frog</name>
    <dbReference type="NCBI Taxonomy" id="8355"/>
    <lineage>
        <taxon>Eukaryota</taxon>
        <taxon>Metazoa</taxon>
        <taxon>Chordata</taxon>
        <taxon>Craniata</taxon>
        <taxon>Vertebrata</taxon>
        <taxon>Euteleostomi</taxon>
        <taxon>Amphibia</taxon>
        <taxon>Batrachia</taxon>
        <taxon>Anura</taxon>
        <taxon>Pipoidea</taxon>
        <taxon>Pipidae</taxon>
        <taxon>Xenopodinae</taxon>
        <taxon>Xenopus</taxon>
        <taxon>Xenopus</taxon>
    </lineage>
</organism>
<reference key="1">
    <citation type="submission" date="2004-06" db="EMBL/GenBank/DDBJ databases">
        <authorList>
            <consortium name="NIH - Xenopus Gene Collection (XGC) project"/>
        </authorList>
    </citation>
    <scope>NUCLEOTIDE SEQUENCE [LARGE SCALE MRNA]</scope>
    <source>
        <tissue>Spleen</tissue>
    </source>
</reference>
<comment type="function">
    <text evidence="3">E3 ubiquitin-protein ligase which accepts ubiquitin from specific E2 ubiquitin-conjugating enzymes, and transfers it to substrates, generally promoting their degradation by the proteasome.</text>
</comment>
<comment type="catalytic activity">
    <reaction evidence="3">
        <text>S-ubiquitinyl-[E2 ubiquitin-conjugating enzyme]-L-cysteine + [acceptor protein]-L-lysine = [E2 ubiquitin-conjugating enzyme]-L-cysteine + N(6)-ubiquitinyl-[acceptor protein]-L-lysine.</text>
        <dbReference type="EC" id="2.3.2.27"/>
    </reaction>
</comment>
<comment type="pathway">
    <text>Protein modification; protein ubiquitination.</text>
</comment>
<comment type="subunit">
    <text evidence="3">Interacts with several SH3 domain-containing proteins and with poly-ubiquitinated proteins.</text>
</comment>
<comment type="subcellular location">
    <subcellularLocation>
        <location evidence="3">Cytoplasm</location>
    </subcellularLocation>
</comment>
<comment type="domain">
    <text>The N-terminus is composed of the phosphotyrosine binding (PTB) domain, a short linker region and the RING-type zinc finger. The PTB domain, which is also called TKB (tyrosine kinase binding) domain, is composed of three different subdomains: a four-helix bundle (4H), a calcium-binding EF hand and a divergent SH2 domain.</text>
</comment>
<comment type="domain">
    <text evidence="3">The RING-type zinc finger domain mediates binding to an E2 ubiquitin-conjugating enzyme.</text>
</comment>
<comment type="miscellaneous">
    <text evidence="1">This protein has one functional calcium-binding site.</text>
</comment>
<name>CBLBA_XENLA</name>
<feature type="chain" id="PRO_0000055863" description="E3 ubiquitin-protein ligase CBL-B-A">
    <location>
        <begin position="1"/>
        <end position="918"/>
    </location>
</feature>
<feature type="domain" description="Cbl-PTB" evidence="5">
    <location>
        <begin position="46"/>
        <end position="354"/>
    </location>
</feature>
<feature type="zinc finger region" description="RING-type" evidence="4">
    <location>
        <begin position="384"/>
        <end position="423"/>
    </location>
</feature>
<feature type="region of interest" description="Disordered" evidence="6">
    <location>
        <begin position="1"/>
        <end position="27"/>
    </location>
</feature>
<feature type="region of interest" description="4H">
    <location>
        <begin position="46"/>
        <end position="178"/>
    </location>
</feature>
<feature type="region of interest" description="EF-hand-like">
    <location>
        <begin position="179"/>
        <end position="251"/>
    </location>
</feature>
<feature type="region of interest" description="SH2-like">
    <location>
        <begin position="252"/>
        <end position="354"/>
    </location>
</feature>
<feature type="region of interest" description="Linker">
    <location>
        <begin position="355"/>
        <end position="383"/>
    </location>
</feature>
<feature type="region of interest" description="Disordered" evidence="6">
    <location>
        <begin position="481"/>
        <end position="582"/>
    </location>
</feature>
<feature type="region of interest" description="Disordered" evidence="6">
    <location>
        <begin position="780"/>
        <end position="831"/>
    </location>
</feature>
<feature type="region of interest" description="Disordered" evidence="6">
    <location>
        <begin position="857"/>
        <end position="918"/>
    </location>
</feature>
<feature type="compositionally biased region" description="Low complexity" evidence="6">
    <location>
        <begin position="1"/>
        <end position="18"/>
    </location>
</feature>
<feature type="compositionally biased region" description="Polar residues" evidence="6">
    <location>
        <begin position="483"/>
        <end position="497"/>
    </location>
</feature>
<feature type="compositionally biased region" description="Pro residues" evidence="6">
    <location>
        <begin position="554"/>
        <end position="576"/>
    </location>
</feature>
<feature type="compositionally biased region" description="Pro residues" evidence="6">
    <location>
        <begin position="821"/>
        <end position="830"/>
    </location>
</feature>
<feature type="compositionally biased region" description="Polar residues" evidence="6">
    <location>
        <begin position="898"/>
        <end position="918"/>
    </location>
</feature>
<feature type="binding site" evidence="2">
    <location>
        <position position="232"/>
    </location>
    <ligand>
        <name>Ca(2+)</name>
        <dbReference type="ChEBI" id="CHEBI:29108"/>
    </ligand>
</feature>
<feature type="binding site" evidence="2">
    <location>
        <position position="234"/>
    </location>
    <ligand>
        <name>Ca(2+)</name>
        <dbReference type="ChEBI" id="CHEBI:29108"/>
    </ligand>
</feature>
<feature type="binding site" evidence="2">
    <location>
        <position position="236"/>
    </location>
    <ligand>
        <name>Ca(2+)</name>
        <dbReference type="ChEBI" id="CHEBI:29108"/>
    </ligand>
</feature>
<feature type="binding site" evidence="2">
    <location>
        <position position="238"/>
    </location>
    <ligand>
        <name>Ca(2+)</name>
        <dbReference type="ChEBI" id="CHEBI:29108"/>
    </ligand>
</feature>
<feature type="binding site" evidence="2">
    <location>
        <position position="243"/>
    </location>
    <ligand>
        <name>Ca(2+)</name>
        <dbReference type="ChEBI" id="CHEBI:29108"/>
    </ligand>
</feature>
<feature type="binding site" evidence="1">
    <location>
        <position position="297"/>
    </location>
    <ligand>
        <name>4-O-phospho-L-tyrosine</name>
        <dbReference type="ChEBI" id="CHEBI:62338"/>
    </ligand>
</feature>
<evidence type="ECO:0000250" key="1"/>
<evidence type="ECO:0000250" key="2">
    <source>
        <dbReference type="UniProtKB" id="P22681"/>
    </source>
</evidence>
<evidence type="ECO:0000250" key="3">
    <source>
        <dbReference type="UniProtKB" id="Q13191"/>
    </source>
</evidence>
<evidence type="ECO:0000255" key="4">
    <source>
        <dbReference type="PROSITE-ProRule" id="PRU00175"/>
    </source>
</evidence>
<evidence type="ECO:0000255" key="5">
    <source>
        <dbReference type="PROSITE-ProRule" id="PRU00839"/>
    </source>
</evidence>
<evidence type="ECO:0000256" key="6">
    <source>
        <dbReference type="SAM" id="MobiDB-lite"/>
    </source>
</evidence>
<evidence type="ECO:0000305" key="7"/>
<sequence>MASGSGSSSSTSSSALSGRLPGSRSANPRKARILGLFDAIQDAVGPPKQAAADRRTVEKTWKLMDKVVRLCQNPKLQLKNSPPYILDILPDTYQHLRLILSKYDDNQKLAQLSENEYFKIYIDSLIKKSKRAMRLFKEGKERMYEEQSQERRNLTKLSLIFSHMLAEIKAIFPSGQFQGDNFRITKADAAEFWRKFFGERTIVPWKIFRQCLHEVHQISSGLEAMALKSTIDLTCNDYISVFEFDIFTRLFQPWGSILRNWNFLAVTHPGYMAFLTYDEVKARLQKYSLKPGSYIFRLSCTRLGQWAIGYVTADGNILQTIPHNKPLFQALIDGSREGFYLYPDGRSYNPDLTGLCEPTPHDHIKVTQEQYELYCEMGSTFQLCKICAENDKDVKIEPCGHLMCTSCLTSWQESDGQGCPFCRCEIKGMEPIIVDPFDPRDESRCFSFSDSLCTPMLDFDDDDLREECLIMNRLAALRKMNERQNSPVTSPGSSPLSQRRKTPPEPLQIPHLNLPPVPPRLDLIQKGLARSPCASPTGSPKSSPCMVRKQDKPLPAPPPLLREPPPPPERPPPIPPDSRTCRHLHHADNVPCRDQSTPHEAWCTRDLSGGNPASVCRVTHDGSPKLGVPSSSVLNGRHSRMSTEAGFMRHKHHKRRESPLETLRVYNGLSGNEEYDVPPRLSPPTITIHPIVKCPVLVNSVSDKVRNSAEEDDCEYKIPSSHPVSSRLPLHCHSIKHFPRLCENGQCLSNGTHNGISEIKKLKPPDQGDVIATSTVPIHFPPARTSARENHPHGSSLTRTPSDYDLLVPHPGEESFDISPPSQPPPPPPARTCVTEHVMPTALGSRPNSDVDLFLPHSDPCPEAPLPPARRGPGEVKSNRLSQEYDQLPSCPGKGQEKASNTKGELLLPNQNLIMRPT</sequence>
<accession>Q6GQL0</accession>
<dbReference type="EC" id="2.3.2.27" evidence="3"/>
<dbReference type="EMBL" id="BC072732">
    <property type="protein sequence ID" value="AAH72732.1"/>
    <property type="molecule type" value="mRNA"/>
</dbReference>
<dbReference type="RefSeq" id="NP_001085428.1">
    <property type="nucleotide sequence ID" value="NM_001091959.1"/>
</dbReference>
<dbReference type="SMR" id="Q6GQL0"/>
<dbReference type="DNASU" id="443854"/>
<dbReference type="GeneID" id="443854"/>
<dbReference type="KEGG" id="xla:443854"/>
<dbReference type="AGR" id="Xenbase:XB-GENE-6251733"/>
<dbReference type="CTD" id="443854"/>
<dbReference type="Xenbase" id="XB-GENE-6251733">
    <property type="gene designation" value="cblb.L"/>
</dbReference>
<dbReference type="OrthoDB" id="7237699at2759"/>
<dbReference type="UniPathway" id="UPA00143"/>
<dbReference type="Proteomes" id="UP000186698">
    <property type="component" value="Chromosome 2L"/>
</dbReference>
<dbReference type="Bgee" id="443854">
    <property type="expression patterns" value="Expressed in testis and 19 other cell types or tissues"/>
</dbReference>
<dbReference type="GO" id="GO:0005737">
    <property type="term" value="C:cytoplasm"/>
    <property type="evidence" value="ECO:0007669"/>
    <property type="project" value="UniProtKB-SubCell"/>
</dbReference>
<dbReference type="GO" id="GO:0045121">
    <property type="term" value="C:membrane raft"/>
    <property type="evidence" value="ECO:0000318"/>
    <property type="project" value="GO_Central"/>
</dbReference>
<dbReference type="GO" id="GO:0005886">
    <property type="term" value="C:plasma membrane"/>
    <property type="evidence" value="ECO:0000318"/>
    <property type="project" value="GO_Central"/>
</dbReference>
<dbReference type="GO" id="GO:0005509">
    <property type="term" value="F:calcium ion binding"/>
    <property type="evidence" value="ECO:0007669"/>
    <property type="project" value="InterPro"/>
</dbReference>
<dbReference type="GO" id="GO:0001784">
    <property type="term" value="F:phosphotyrosine residue binding"/>
    <property type="evidence" value="ECO:0007669"/>
    <property type="project" value="InterPro"/>
</dbReference>
<dbReference type="GO" id="GO:0030971">
    <property type="term" value="F:receptor tyrosine kinase binding"/>
    <property type="evidence" value="ECO:0000318"/>
    <property type="project" value="GO_Central"/>
</dbReference>
<dbReference type="GO" id="GO:0017124">
    <property type="term" value="F:SH3 domain binding"/>
    <property type="evidence" value="ECO:0007669"/>
    <property type="project" value="TreeGrafter"/>
</dbReference>
<dbReference type="GO" id="GO:0061630">
    <property type="term" value="F:ubiquitin protein ligase activity"/>
    <property type="evidence" value="ECO:0000318"/>
    <property type="project" value="GO_Central"/>
</dbReference>
<dbReference type="GO" id="GO:0008270">
    <property type="term" value="F:zinc ion binding"/>
    <property type="evidence" value="ECO:0007669"/>
    <property type="project" value="UniProtKB-KW"/>
</dbReference>
<dbReference type="GO" id="GO:0007166">
    <property type="term" value="P:cell surface receptor signaling pathway"/>
    <property type="evidence" value="ECO:0007669"/>
    <property type="project" value="InterPro"/>
</dbReference>
<dbReference type="GO" id="GO:0002376">
    <property type="term" value="P:immune system process"/>
    <property type="evidence" value="ECO:0007669"/>
    <property type="project" value="UniProtKB-KW"/>
</dbReference>
<dbReference type="GO" id="GO:0042059">
    <property type="term" value="P:negative regulation of epidermal growth factor receptor signaling pathway"/>
    <property type="evidence" value="ECO:0000318"/>
    <property type="project" value="GO_Central"/>
</dbReference>
<dbReference type="GO" id="GO:0016567">
    <property type="term" value="P:protein ubiquitination"/>
    <property type="evidence" value="ECO:0007669"/>
    <property type="project" value="UniProtKB-UniPathway"/>
</dbReference>
<dbReference type="GO" id="GO:2000583">
    <property type="term" value="P:regulation of platelet-derived growth factor receptor-alpha signaling pathway"/>
    <property type="evidence" value="ECO:0000250"/>
    <property type="project" value="UniProtKB"/>
</dbReference>
<dbReference type="GO" id="GO:0007165">
    <property type="term" value="P:signal transduction"/>
    <property type="evidence" value="ECO:0000318"/>
    <property type="project" value="GO_Central"/>
</dbReference>
<dbReference type="CDD" id="cd16708">
    <property type="entry name" value="RING-HC_Cbl"/>
    <property type="match status" value="1"/>
</dbReference>
<dbReference type="CDD" id="cd09920">
    <property type="entry name" value="SH2_Cbl-b_TKB"/>
    <property type="match status" value="1"/>
</dbReference>
<dbReference type="FunFam" id="1.10.238.10:FF:000022">
    <property type="entry name" value="E3 ubiquitin-protein ligase CBL"/>
    <property type="match status" value="1"/>
</dbReference>
<dbReference type="FunFam" id="1.20.930.20:FF:000001">
    <property type="entry name" value="E3 ubiquitin-protein ligase CBL"/>
    <property type="match status" value="1"/>
</dbReference>
<dbReference type="FunFam" id="3.30.40.10:FF:000015">
    <property type="entry name" value="E3 ubiquitin-protein ligase CBL"/>
    <property type="match status" value="1"/>
</dbReference>
<dbReference type="FunFam" id="3.30.505.10:FF:000154">
    <property type="entry name" value="E3 ubiquitin-protein ligase CBL"/>
    <property type="match status" value="1"/>
</dbReference>
<dbReference type="Gene3D" id="1.20.930.20">
    <property type="entry name" value="Adaptor protein Cbl, N-terminal domain"/>
    <property type="match status" value="1"/>
</dbReference>
<dbReference type="Gene3D" id="1.10.238.10">
    <property type="entry name" value="EF-hand"/>
    <property type="match status" value="1"/>
</dbReference>
<dbReference type="Gene3D" id="3.30.505.10">
    <property type="entry name" value="SH2 domain"/>
    <property type="match status" value="1"/>
</dbReference>
<dbReference type="Gene3D" id="3.30.40.10">
    <property type="entry name" value="Zinc/RING finger domain, C3HC4 (zinc finger)"/>
    <property type="match status" value="1"/>
</dbReference>
<dbReference type="InterPro" id="IPR024162">
    <property type="entry name" value="Adaptor_Cbl"/>
</dbReference>
<dbReference type="InterPro" id="IPR014741">
    <property type="entry name" value="Adaptor_Cbl_EF_hand-like"/>
</dbReference>
<dbReference type="InterPro" id="IPR036537">
    <property type="entry name" value="Adaptor_Cbl_N_dom_sf"/>
</dbReference>
<dbReference type="InterPro" id="IPR003153">
    <property type="entry name" value="Adaptor_Cbl_N_hlx"/>
</dbReference>
<dbReference type="InterPro" id="IPR014742">
    <property type="entry name" value="Adaptor_Cbl_SH2-like"/>
</dbReference>
<dbReference type="InterPro" id="IPR024159">
    <property type="entry name" value="Cbl_PTB"/>
</dbReference>
<dbReference type="InterPro" id="IPR011992">
    <property type="entry name" value="EF-hand-dom_pair"/>
</dbReference>
<dbReference type="InterPro" id="IPR036860">
    <property type="entry name" value="SH2_dom_sf"/>
</dbReference>
<dbReference type="InterPro" id="IPR018957">
    <property type="entry name" value="Znf_C3HC4_RING-type"/>
</dbReference>
<dbReference type="InterPro" id="IPR001841">
    <property type="entry name" value="Znf_RING"/>
</dbReference>
<dbReference type="InterPro" id="IPR013083">
    <property type="entry name" value="Znf_RING/FYVE/PHD"/>
</dbReference>
<dbReference type="InterPro" id="IPR017907">
    <property type="entry name" value="Znf_RING_CS"/>
</dbReference>
<dbReference type="PANTHER" id="PTHR23007">
    <property type="entry name" value="CBL"/>
    <property type="match status" value="1"/>
</dbReference>
<dbReference type="PANTHER" id="PTHR23007:SF3">
    <property type="entry name" value="E3 UBIQUITIN-PROTEIN LIGASE CBL-B"/>
    <property type="match status" value="1"/>
</dbReference>
<dbReference type="Pfam" id="PF02262">
    <property type="entry name" value="Cbl_N"/>
    <property type="match status" value="1"/>
</dbReference>
<dbReference type="Pfam" id="PF02761">
    <property type="entry name" value="Cbl_N2"/>
    <property type="match status" value="1"/>
</dbReference>
<dbReference type="Pfam" id="PF02762">
    <property type="entry name" value="Cbl_N3"/>
    <property type="match status" value="1"/>
</dbReference>
<dbReference type="Pfam" id="PF00097">
    <property type="entry name" value="zf-C3HC4"/>
    <property type="match status" value="1"/>
</dbReference>
<dbReference type="SMART" id="SM00184">
    <property type="entry name" value="RING"/>
    <property type="match status" value="1"/>
</dbReference>
<dbReference type="SUPFAM" id="SSF47473">
    <property type="entry name" value="EF-hand"/>
    <property type="match status" value="1"/>
</dbReference>
<dbReference type="SUPFAM" id="SSF47668">
    <property type="entry name" value="N-terminal domain of cbl (N-cbl)"/>
    <property type="match status" value="1"/>
</dbReference>
<dbReference type="SUPFAM" id="SSF57850">
    <property type="entry name" value="RING/U-box"/>
    <property type="match status" value="1"/>
</dbReference>
<dbReference type="SUPFAM" id="SSF55550">
    <property type="entry name" value="SH2 domain"/>
    <property type="match status" value="1"/>
</dbReference>
<dbReference type="PROSITE" id="PS51506">
    <property type="entry name" value="CBL_PTB"/>
    <property type="match status" value="1"/>
</dbReference>
<dbReference type="PROSITE" id="PS00518">
    <property type="entry name" value="ZF_RING_1"/>
    <property type="match status" value="1"/>
</dbReference>
<dbReference type="PROSITE" id="PS50089">
    <property type="entry name" value="ZF_RING_2"/>
    <property type="match status" value="1"/>
</dbReference>
<protein>
    <recommendedName>
        <fullName>E3 ubiquitin-protein ligase CBL-B-A</fullName>
        <ecNumber evidence="3">2.3.2.27</ecNumber>
    </recommendedName>
    <alternativeName>
        <fullName evidence="7">RING-type E3 ubiquitin transferase CBL-B-A</fullName>
    </alternativeName>
    <alternativeName>
        <fullName>SH3-binding protein CBL-B-A</fullName>
    </alternativeName>
    <alternativeName>
        <fullName>Signal transduction protein CBL-B-A</fullName>
    </alternativeName>
</protein>